<gene>
    <name evidence="1" type="primary">nagK</name>
    <name type="ordered locus">ECS88_1133</name>
</gene>
<keyword id="KW-0067">ATP-binding</keyword>
<keyword id="KW-0119">Carbohydrate metabolism</keyword>
<keyword id="KW-0418">Kinase</keyword>
<keyword id="KW-0479">Metal-binding</keyword>
<keyword id="KW-0547">Nucleotide-binding</keyword>
<keyword id="KW-1185">Reference proteome</keyword>
<keyword id="KW-0808">Transferase</keyword>
<keyword id="KW-0862">Zinc</keyword>
<evidence type="ECO:0000255" key="1">
    <source>
        <dbReference type="HAMAP-Rule" id="MF_01271"/>
    </source>
</evidence>
<sequence>MYYGFDIGGTKIALGVFDSGRQLQWEKRVPTPRDSYDAFLDAVCELVAEADRRFGCKGSVGIGIPGMPETEDGTLYAANVPAASGKPLRADLSARLDRDVRLDNDANCFALSEAWDDEFTQYPLVMGLILGTGVGGGLIFNGKPITGKSYITGEFGHMRLPVDALTMMGLDFPLRRCGCGQHGCIENYLSGRGFAWLYQHYYHQPLQAPEIIALYDQGDEQARAHVERYLDLLAVCLGNILTIVDPDLVVIGGGLSNFPAITTQLAERLPRHLLPVARVPRIERARHGDAGGMRGAAFLHLTD</sequence>
<reference key="1">
    <citation type="journal article" date="2009" name="PLoS Genet.">
        <title>Organised genome dynamics in the Escherichia coli species results in highly diverse adaptive paths.</title>
        <authorList>
            <person name="Touchon M."/>
            <person name="Hoede C."/>
            <person name="Tenaillon O."/>
            <person name="Barbe V."/>
            <person name="Baeriswyl S."/>
            <person name="Bidet P."/>
            <person name="Bingen E."/>
            <person name="Bonacorsi S."/>
            <person name="Bouchier C."/>
            <person name="Bouvet O."/>
            <person name="Calteau A."/>
            <person name="Chiapello H."/>
            <person name="Clermont O."/>
            <person name="Cruveiller S."/>
            <person name="Danchin A."/>
            <person name="Diard M."/>
            <person name="Dossat C."/>
            <person name="Karoui M.E."/>
            <person name="Frapy E."/>
            <person name="Garry L."/>
            <person name="Ghigo J.M."/>
            <person name="Gilles A.M."/>
            <person name="Johnson J."/>
            <person name="Le Bouguenec C."/>
            <person name="Lescat M."/>
            <person name="Mangenot S."/>
            <person name="Martinez-Jehanne V."/>
            <person name="Matic I."/>
            <person name="Nassif X."/>
            <person name="Oztas S."/>
            <person name="Petit M.A."/>
            <person name="Pichon C."/>
            <person name="Rouy Z."/>
            <person name="Ruf C.S."/>
            <person name="Schneider D."/>
            <person name="Tourret J."/>
            <person name="Vacherie B."/>
            <person name="Vallenet D."/>
            <person name="Medigue C."/>
            <person name="Rocha E.P.C."/>
            <person name="Denamur E."/>
        </authorList>
    </citation>
    <scope>NUCLEOTIDE SEQUENCE [LARGE SCALE GENOMIC DNA]</scope>
    <source>
        <strain>S88 / ExPEC</strain>
    </source>
</reference>
<proteinExistence type="inferred from homology"/>
<dbReference type="EC" id="2.7.1.59" evidence="1"/>
<dbReference type="EMBL" id="CU928161">
    <property type="protein sequence ID" value="CAR02459.1"/>
    <property type="molecule type" value="Genomic_DNA"/>
</dbReference>
<dbReference type="RefSeq" id="WP_000291301.1">
    <property type="nucleotide sequence ID" value="NC_011742.1"/>
</dbReference>
<dbReference type="SMR" id="B7MJA6"/>
<dbReference type="KEGG" id="ecz:ECS88_1133"/>
<dbReference type="HOGENOM" id="CLU_036604_0_3_6"/>
<dbReference type="UniPathway" id="UPA00544"/>
<dbReference type="Proteomes" id="UP000000747">
    <property type="component" value="Chromosome"/>
</dbReference>
<dbReference type="GO" id="GO:0005524">
    <property type="term" value="F:ATP binding"/>
    <property type="evidence" value="ECO:0007669"/>
    <property type="project" value="UniProtKB-UniRule"/>
</dbReference>
<dbReference type="GO" id="GO:0045127">
    <property type="term" value="F:N-acetylglucosamine kinase activity"/>
    <property type="evidence" value="ECO:0007669"/>
    <property type="project" value="UniProtKB-UniRule"/>
</dbReference>
<dbReference type="GO" id="GO:0008270">
    <property type="term" value="F:zinc ion binding"/>
    <property type="evidence" value="ECO:0007669"/>
    <property type="project" value="UniProtKB-UniRule"/>
</dbReference>
<dbReference type="GO" id="GO:0006044">
    <property type="term" value="P:N-acetylglucosamine metabolic process"/>
    <property type="evidence" value="ECO:0007669"/>
    <property type="project" value="UniProtKB-UniRule"/>
</dbReference>
<dbReference type="GO" id="GO:0009254">
    <property type="term" value="P:peptidoglycan turnover"/>
    <property type="evidence" value="ECO:0007669"/>
    <property type="project" value="UniProtKB-UniRule"/>
</dbReference>
<dbReference type="CDD" id="cd24057">
    <property type="entry name" value="ASKHA_NBD_ROK_NAGK"/>
    <property type="match status" value="1"/>
</dbReference>
<dbReference type="FunFam" id="3.30.420.40:FF:000049">
    <property type="entry name" value="N-acetyl-D-glucosamine kinase"/>
    <property type="match status" value="1"/>
</dbReference>
<dbReference type="FunFam" id="3.30.420.40:FF:000051">
    <property type="entry name" value="N-acetyl-D-glucosamine kinase"/>
    <property type="match status" value="1"/>
</dbReference>
<dbReference type="Gene3D" id="3.30.420.40">
    <property type="match status" value="2"/>
</dbReference>
<dbReference type="HAMAP" id="MF_01271">
    <property type="entry name" value="GlcNAc_kinase"/>
    <property type="match status" value="1"/>
</dbReference>
<dbReference type="InterPro" id="IPR043129">
    <property type="entry name" value="ATPase_NBD"/>
</dbReference>
<dbReference type="InterPro" id="IPR023505">
    <property type="entry name" value="N-acetyl-D-glucosamine_kinase"/>
</dbReference>
<dbReference type="InterPro" id="IPR000600">
    <property type="entry name" value="ROK"/>
</dbReference>
<dbReference type="InterPro" id="IPR049874">
    <property type="entry name" value="ROK_cs"/>
</dbReference>
<dbReference type="NCBIfam" id="NF009835">
    <property type="entry name" value="PRK13310.1"/>
    <property type="match status" value="1"/>
</dbReference>
<dbReference type="PANTHER" id="PTHR18964:SF162">
    <property type="entry name" value="N-ACETYL-D-GLUCOSAMINE KINASE"/>
    <property type="match status" value="1"/>
</dbReference>
<dbReference type="PANTHER" id="PTHR18964">
    <property type="entry name" value="ROK (REPRESSOR, ORF, KINASE) FAMILY"/>
    <property type="match status" value="1"/>
</dbReference>
<dbReference type="Pfam" id="PF00480">
    <property type="entry name" value="ROK"/>
    <property type="match status" value="1"/>
</dbReference>
<dbReference type="SUPFAM" id="SSF53067">
    <property type="entry name" value="Actin-like ATPase domain"/>
    <property type="match status" value="1"/>
</dbReference>
<dbReference type="PROSITE" id="PS01125">
    <property type="entry name" value="ROK"/>
    <property type="match status" value="1"/>
</dbReference>
<comment type="function">
    <text evidence="1">Catalyzes the phosphorylation of N-acetyl-D-glucosamine (GlcNAc) derived from cell-wall degradation, yielding GlcNAc-6-P.</text>
</comment>
<comment type="catalytic activity">
    <reaction evidence="1">
        <text>N-acetyl-D-glucosamine + ATP = N-acetyl-D-glucosamine 6-phosphate + ADP + H(+)</text>
        <dbReference type="Rhea" id="RHEA:17417"/>
        <dbReference type="ChEBI" id="CHEBI:15378"/>
        <dbReference type="ChEBI" id="CHEBI:30616"/>
        <dbReference type="ChEBI" id="CHEBI:57513"/>
        <dbReference type="ChEBI" id="CHEBI:456216"/>
        <dbReference type="ChEBI" id="CHEBI:506227"/>
        <dbReference type="EC" id="2.7.1.59"/>
    </reaction>
</comment>
<comment type="pathway">
    <text evidence="1">Cell wall biogenesis; peptidoglycan recycling.</text>
</comment>
<comment type="similarity">
    <text evidence="1">Belongs to the ROK (NagC/XylR) family. NagK subfamily.</text>
</comment>
<feature type="chain" id="PRO_1000140180" description="N-acetyl-D-glucosamine kinase">
    <location>
        <begin position="1"/>
        <end position="303"/>
    </location>
</feature>
<feature type="binding site" evidence="1">
    <location>
        <begin position="4"/>
        <end position="11"/>
    </location>
    <ligand>
        <name>ATP</name>
        <dbReference type="ChEBI" id="CHEBI:30616"/>
    </ligand>
</feature>
<feature type="binding site" evidence="1">
    <location>
        <begin position="133"/>
        <end position="140"/>
    </location>
    <ligand>
        <name>ATP</name>
        <dbReference type="ChEBI" id="CHEBI:30616"/>
    </ligand>
</feature>
<feature type="binding site" evidence="1">
    <location>
        <position position="157"/>
    </location>
    <ligand>
        <name>Zn(2+)</name>
        <dbReference type="ChEBI" id="CHEBI:29105"/>
    </ligand>
</feature>
<feature type="binding site" evidence="1">
    <location>
        <position position="177"/>
    </location>
    <ligand>
        <name>Zn(2+)</name>
        <dbReference type="ChEBI" id="CHEBI:29105"/>
    </ligand>
</feature>
<feature type="binding site" evidence="1">
    <location>
        <position position="179"/>
    </location>
    <ligand>
        <name>Zn(2+)</name>
        <dbReference type="ChEBI" id="CHEBI:29105"/>
    </ligand>
</feature>
<feature type="binding site" evidence="1">
    <location>
        <position position="184"/>
    </location>
    <ligand>
        <name>Zn(2+)</name>
        <dbReference type="ChEBI" id="CHEBI:29105"/>
    </ligand>
</feature>
<accession>B7MJA6</accession>
<organism>
    <name type="scientific">Escherichia coli O45:K1 (strain S88 / ExPEC)</name>
    <dbReference type="NCBI Taxonomy" id="585035"/>
    <lineage>
        <taxon>Bacteria</taxon>
        <taxon>Pseudomonadati</taxon>
        <taxon>Pseudomonadota</taxon>
        <taxon>Gammaproteobacteria</taxon>
        <taxon>Enterobacterales</taxon>
        <taxon>Enterobacteriaceae</taxon>
        <taxon>Escherichia</taxon>
    </lineage>
</organism>
<protein>
    <recommendedName>
        <fullName evidence="1">N-acetyl-D-glucosamine kinase</fullName>
        <ecNumber evidence="1">2.7.1.59</ecNumber>
    </recommendedName>
    <alternativeName>
        <fullName evidence="1">GlcNAc kinase</fullName>
    </alternativeName>
</protein>
<name>NAGK_ECO45</name>